<feature type="chain" id="PRO_1000133096" description="Phosphopentomutase">
    <location>
        <begin position="1"/>
        <end position="407"/>
    </location>
</feature>
<feature type="binding site" evidence="1">
    <location>
        <position position="10"/>
    </location>
    <ligand>
        <name>Mn(2+)</name>
        <dbReference type="ChEBI" id="CHEBI:29035"/>
        <label>1</label>
    </ligand>
</feature>
<feature type="binding site" evidence="1">
    <location>
        <position position="306"/>
    </location>
    <ligand>
        <name>Mn(2+)</name>
        <dbReference type="ChEBI" id="CHEBI:29035"/>
        <label>2</label>
    </ligand>
</feature>
<feature type="binding site" evidence="1">
    <location>
        <position position="311"/>
    </location>
    <ligand>
        <name>Mn(2+)</name>
        <dbReference type="ChEBI" id="CHEBI:29035"/>
        <label>2</label>
    </ligand>
</feature>
<feature type="binding site" evidence="1">
    <location>
        <position position="347"/>
    </location>
    <ligand>
        <name>Mn(2+)</name>
        <dbReference type="ChEBI" id="CHEBI:29035"/>
        <label>1</label>
    </ligand>
</feature>
<feature type="binding site" evidence="1">
    <location>
        <position position="348"/>
    </location>
    <ligand>
        <name>Mn(2+)</name>
        <dbReference type="ChEBI" id="CHEBI:29035"/>
        <label>1</label>
    </ligand>
</feature>
<feature type="binding site" evidence="1">
    <location>
        <position position="359"/>
    </location>
    <ligand>
        <name>Mn(2+)</name>
        <dbReference type="ChEBI" id="CHEBI:29035"/>
        <label>2</label>
    </ligand>
</feature>
<accession>B4TH01</accession>
<sequence length="407" mass="44244">MKRAFIMVLDSFGIGATEDADRFGDVGSDTLGHIAEACAKGEADNGRKGPLNLPNLTRLGLVKAHEGSTGKIAAGMDGNADVIGAYAWAHELSSGKDTPSGHWEIAGVPVLFDWGYFSDHENSFPQELLDKLVKRANLPGYLGNCHSSGTVILDQLGEEHMKTGKPIFYTSADSVFQIACHEETFGLDKLYELCEIAREELTEGGYNIGRVIARPFIGDKAGNFQRTGNRHDLAVEPPAPTVLQKLVDEKQGHVVSVGKIADIYANCGITKKVKATGLDALFDATLKEMKEAGDKTIVFTNFVDFDSSWGHRRDIAGYAAGLELFDRRLPELMELVGEDDILILTADHGCDPSWTGTDHTREHIPVLIYGPKVKPGSLGHRETFADIGQTLATYFGTSPMDYGKNML</sequence>
<gene>
    <name evidence="1" type="primary">deoB</name>
    <name type="ordered locus">SeHA_C4977</name>
</gene>
<organism>
    <name type="scientific">Salmonella heidelberg (strain SL476)</name>
    <dbReference type="NCBI Taxonomy" id="454169"/>
    <lineage>
        <taxon>Bacteria</taxon>
        <taxon>Pseudomonadati</taxon>
        <taxon>Pseudomonadota</taxon>
        <taxon>Gammaproteobacteria</taxon>
        <taxon>Enterobacterales</taxon>
        <taxon>Enterobacteriaceae</taxon>
        <taxon>Salmonella</taxon>
    </lineage>
</organism>
<proteinExistence type="inferred from homology"/>
<keyword id="KW-0963">Cytoplasm</keyword>
<keyword id="KW-0413">Isomerase</keyword>
<keyword id="KW-0464">Manganese</keyword>
<keyword id="KW-0479">Metal-binding</keyword>
<reference key="1">
    <citation type="journal article" date="2011" name="J. Bacteriol.">
        <title>Comparative genomics of 28 Salmonella enterica isolates: evidence for CRISPR-mediated adaptive sublineage evolution.</title>
        <authorList>
            <person name="Fricke W.F."/>
            <person name="Mammel M.K."/>
            <person name="McDermott P.F."/>
            <person name="Tartera C."/>
            <person name="White D.G."/>
            <person name="Leclerc J.E."/>
            <person name="Ravel J."/>
            <person name="Cebula T.A."/>
        </authorList>
    </citation>
    <scope>NUCLEOTIDE SEQUENCE [LARGE SCALE GENOMIC DNA]</scope>
    <source>
        <strain>SL476</strain>
    </source>
</reference>
<evidence type="ECO:0000255" key="1">
    <source>
        <dbReference type="HAMAP-Rule" id="MF_00740"/>
    </source>
</evidence>
<protein>
    <recommendedName>
        <fullName evidence="1">Phosphopentomutase</fullName>
        <ecNumber evidence="1">5.4.2.7</ecNumber>
    </recommendedName>
    <alternativeName>
        <fullName evidence="1">Phosphodeoxyribomutase</fullName>
    </alternativeName>
</protein>
<dbReference type="EC" id="5.4.2.7" evidence="1"/>
<dbReference type="EMBL" id="CP001120">
    <property type="protein sequence ID" value="ACF70063.1"/>
    <property type="molecule type" value="Genomic_DNA"/>
</dbReference>
<dbReference type="RefSeq" id="WP_000816454.1">
    <property type="nucleotide sequence ID" value="NC_011083.1"/>
</dbReference>
<dbReference type="SMR" id="B4TH01"/>
<dbReference type="KEGG" id="seh:SeHA_C4977"/>
<dbReference type="HOGENOM" id="CLU_053861_0_0_6"/>
<dbReference type="UniPathway" id="UPA00002">
    <property type="reaction ID" value="UER00467"/>
</dbReference>
<dbReference type="Proteomes" id="UP000001866">
    <property type="component" value="Chromosome"/>
</dbReference>
<dbReference type="GO" id="GO:0005829">
    <property type="term" value="C:cytosol"/>
    <property type="evidence" value="ECO:0007669"/>
    <property type="project" value="TreeGrafter"/>
</dbReference>
<dbReference type="GO" id="GO:0000287">
    <property type="term" value="F:magnesium ion binding"/>
    <property type="evidence" value="ECO:0007669"/>
    <property type="project" value="InterPro"/>
</dbReference>
<dbReference type="GO" id="GO:0030145">
    <property type="term" value="F:manganese ion binding"/>
    <property type="evidence" value="ECO:0007669"/>
    <property type="project" value="UniProtKB-UniRule"/>
</dbReference>
<dbReference type="GO" id="GO:0008973">
    <property type="term" value="F:phosphopentomutase activity"/>
    <property type="evidence" value="ECO:0007669"/>
    <property type="project" value="UniProtKB-UniRule"/>
</dbReference>
<dbReference type="GO" id="GO:0006018">
    <property type="term" value="P:2-deoxyribose 1-phosphate catabolic process"/>
    <property type="evidence" value="ECO:0007669"/>
    <property type="project" value="UniProtKB-UniRule"/>
</dbReference>
<dbReference type="GO" id="GO:0006015">
    <property type="term" value="P:5-phosphoribose 1-diphosphate biosynthetic process"/>
    <property type="evidence" value="ECO:0007669"/>
    <property type="project" value="UniProtKB-UniPathway"/>
</dbReference>
<dbReference type="GO" id="GO:0043094">
    <property type="term" value="P:metabolic compound salvage"/>
    <property type="evidence" value="ECO:0007669"/>
    <property type="project" value="InterPro"/>
</dbReference>
<dbReference type="GO" id="GO:0009117">
    <property type="term" value="P:nucleotide metabolic process"/>
    <property type="evidence" value="ECO:0007669"/>
    <property type="project" value="InterPro"/>
</dbReference>
<dbReference type="CDD" id="cd16009">
    <property type="entry name" value="PPM"/>
    <property type="match status" value="1"/>
</dbReference>
<dbReference type="FunFam" id="3.30.70.1250:FF:000001">
    <property type="entry name" value="Phosphopentomutase"/>
    <property type="match status" value="1"/>
</dbReference>
<dbReference type="Gene3D" id="3.40.720.10">
    <property type="entry name" value="Alkaline Phosphatase, subunit A"/>
    <property type="match status" value="1"/>
</dbReference>
<dbReference type="Gene3D" id="3.30.70.1250">
    <property type="entry name" value="Phosphopentomutase"/>
    <property type="match status" value="1"/>
</dbReference>
<dbReference type="HAMAP" id="MF_00740">
    <property type="entry name" value="Phosphopentomut"/>
    <property type="match status" value="1"/>
</dbReference>
<dbReference type="InterPro" id="IPR017850">
    <property type="entry name" value="Alkaline_phosphatase_core_sf"/>
</dbReference>
<dbReference type="InterPro" id="IPR010045">
    <property type="entry name" value="DeoB"/>
</dbReference>
<dbReference type="InterPro" id="IPR006124">
    <property type="entry name" value="Metalloenzyme"/>
</dbReference>
<dbReference type="InterPro" id="IPR024052">
    <property type="entry name" value="Phosphopentomutase_DeoB_cap_sf"/>
</dbReference>
<dbReference type="NCBIfam" id="TIGR01696">
    <property type="entry name" value="deoB"/>
    <property type="match status" value="1"/>
</dbReference>
<dbReference type="NCBIfam" id="NF003766">
    <property type="entry name" value="PRK05362.1"/>
    <property type="match status" value="1"/>
</dbReference>
<dbReference type="PANTHER" id="PTHR21110">
    <property type="entry name" value="PHOSPHOPENTOMUTASE"/>
    <property type="match status" value="1"/>
</dbReference>
<dbReference type="PANTHER" id="PTHR21110:SF0">
    <property type="entry name" value="PHOSPHOPENTOMUTASE"/>
    <property type="match status" value="1"/>
</dbReference>
<dbReference type="Pfam" id="PF01676">
    <property type="entry name" value="Metalloenzyme"/>
    <property type="match status" value="1"/>
</dbReference>
<dbReference type="PIRSF" id="PIRSF001491">
    <property type="entry name" value="Ppentomutase"/>
    <property type="match status" value="1"/>
</dbReference>
<dbReference type="SUPFAM" id="SSF53649">
    <property type="entry name" value="Alkaline phosphatase-like"/>
    <property type="match status" value="1"/>
</dbReference>
<dbReference type="SUPFAM" id="SSF143856">
    <property type="entry name" value="DeoB insert domain-like"/>
    <property type="match status" value="1"/>
</dbReference>
<name>DEOB_SALHS</name>
<comment type="function">
    <text evidence="1">Isomerase that catalyzes the conversion of deoxy-ribose 1-phosphate (dRib-1-P) and ribose 1-phosphate (Rib-1-P) to deoxy-ribose 5-phosphate (dRib-5-P) and ribose 5-phosphate (Rib-5-P), respectively.</text>
</comment>
<comment type="catalytic activity">
    <reaction evidence="1">
        <text>2-deoxy-alpha-D-ribose 1-phosphate = 2-deoxy-D-ribose 5-phosphate</text>
        <dbReference type="Rhea" id="RHEA:27658"/>
        <dbReference type="ChEBI" id="CHEBI:57259"/>
        <dbReference type="ChEBI" id="CHEBI:62877"/>
        <dbReference type="EC" id="5.4.2.7"/>
    </reaction>
</comment>
<comment type="catalytic activity">
    <reaction evidence="1">
        <text>alpha-D-ribose 1-phosphate = D-ribose 5-phosphate</text>
        <dbReference type="Rhea" id="RHEA:18793"/>
        <dbReference type="ChEBI" id="CHEBI:57720"/>
        <dbReference type="ChEBI" id="CHEBI:78346"/>
        <dbReference type="EC" id="5.4.2.7"/>
    </reaction>
</comment>
<comment type="cofactor">
    <cofactor evidence="1">
        <name>Mn(2+)</name>
        <dbReference type="ChEBI" id="CHEBI:29035"/>
    </cofactor>
    <text evidence="1">Binds 2 manganese ions.</text>
</comment>
<comment type="pathway">
    <text evidence="1">Carbohydrate degradation; 2-deoxy-D-ribose 1-phosphate degradation; D-glyceraldehyde 3-phosphate and acetaldehyde from 2-deoxy-alpha-D-ribose 1-phosphate: step 1/2.</text>
</comment>
<comment type="subcellular location">
    <subcellularLocation>
        <location evidence="1">Cytoplasm</location>
    </subcellularLocation>
</comment>
<comment type="similarity">
    <text evidence="1">Belongs to the phosphopentomutase family.</text>
</comment>